<feature type="chain" id="PRO_0000204027" description="Ice nucleation protein">
    <location>
        <begin position="1"/>
        <end position="1567"/>
    </location>
</feature>
<feature type="region of interest" description="Disordered" evidence="2">
    <location>
        <begin position="130"/>
        <end position="195"/>
    </location>
</feature>
<feature type="region of interest" description="Disordered" evidence="2">
    <location>
        <begin position="270"/>
        <end position="329"/>
    </location>
</feature>
<feature type="region of interest" description="Disordered" evidence="2">
    <location>
        <begin position="356"/>
        <end position="378"/>
    </location>
</feature>
<feature type="region of interest" description="Disordered" evidence="2">
    <location>
        <begin position="449"/>
        <end position="474"/>
    </location>
</feature>
<feature type="region of interest" description="Disordered" evidence="2">
    <location>
        <begin position="502"/>
        <end position="529"/>
    </location>
</feature>
<feature type="region of interest" description="Disordered" evidence="2">
    <location>
        <begin position="594"/>
        <end position="620"/>
    </location>
</feature>
<feature type="region of interest" description="Disordered" evidence="2">
    <location>
        <begin position="642"/>
        <end position="668"/>
    </location>
</feature>
<feature type="region of interest" description="Disordered" evidence="2">
    <location>
        <begin position="689"/>
        <end position="716"/>
    </location>
</feature>
<feature type="region of interest" description="Disordered" evidence="2">
    <location>
        <begin position="738"/>
        <end position="764"/>
    </location>
</feature>
<feature type="region of interest" description="Disordered" evidence="2">
    <location>
        <begin position="785"/>
        <end position="810"/>
    </location>
</feature>
<feature type="region of interest" description="Disordered" evidence="2">
    <location>
        <begin position="833"/>
        <end position="860"/>
    </location>
</feature>
<feature type="region of interest" description="Disordered" evidence="2">
    <location>
        <begin position="929"/>
        <end position="959"/>
    </location>
</feature>
<feature type="region of interest" description="Disordered" evidence="2">
    <location>
        <begin position="977"/>
        <end position="1004"/>
    </location>
</feature>
<feature type="compositionally biased region" description="Low complexity" evidence="2">
    <location>
        <begin position="130"/>
        <end position="185"/>
    </location>
</feature>
<feature type="compositionally biased region" description="Polar residues" evidence="2">
    <location>
        <begin position="270"/>
        <end position="282"/>
    </location>
</feature>
<feature type="compositionally biased region" description="Low complexity" evidence="2">
    <location>
        <begin position="283"/>
        <end position="296"/>
    </location>
</feature>
<feature type="compositionally biased region" description="Polar residues" evidence="2">
    <location>
        <begin position="302"/>
        <end position="325"/>
    </location>
</feature>
<feature type="compositionally biased region" description="Polar residues" evidence="2">
    <location>
        <begin position="356"/>
        <end position="373"/>
    </location>
</feature>
<feature type="compositionally biased region" description="Polar residues" evidence="2">
    <location>
        <begin position="449"/>
        <end position="469"/>
    </location>
</feature>
<feature type="compositionally biased region" description="Polar residues" evidence="2">
    <location>
        <begin position="502"/>
        <end position="519"/>
    </location>
</feature>
<feature type="compositionally biased region" description="Low complexity" evidence="2">
    <location>
        <begin position="520"/>
        <end position="529"/>
    </location>
</feature>
<feature type="compositionally biased region" description="Polar residues" evidence="2">
    <location>
        <begin position="594"/>
        <end position="613"/>
    </location>
</feature>
<feature type="compositionally biased region" description="Polar residues" evidence="2">
    <location>
        <begin position="642"/>
        <end position="661"/>
    </location>
</feature>
<feature type="compositionally biased region" description="Polar residues" evidence="2">
    <location>
        <begin position="689"/>
        <end position="709"/>
    </location>
</feature>
<feature type="compositionally biased region" description="Polar residues" evidence="2">
    <location>
        <begin position="738"/>
        <end position="757"/>
    </location>
</feature>
<feature type="compositionally biased region" description="Polar residues" evidence="2">
    <location>
        <begin position="785"/>
        <end position="805"/>
    </location>
</feature>
<feature type="compositionally biased region" description="Polar residues" evidence="2">
    <location>
        <begin position="833"/>
        <end position="853"/>
    </location>
</feature>
<feature type="compositionally biased region" description="Polar residues" evidence="2">
    <location>
        <begin position="929"/>
        <end position="949"/>
    </location>
</feature>
<feature type="compositionally biased region" description="Polar residues" evidence="2">
    <location>
        <begin position="977"/>
        <end position="997"/>
    </location>
</feature>
<accession>P18127</accession>
<evidence type="ECO:0000250" key="1"/>
<evidence type="ECO:0000256" key="2">
    <source>
        <dbReference type="SAM" id="MobiDB-lite"/>
    </source>
</evidence>
<evidence type="ECO:0000305" key="3"/>
<name>ICEN_XANCT</name>
<reference key="1">
    <citation type="journal article" date="1990" name="Mol. Gen. Genet.">
        <title>Conserved repetition in the ice nucleation gene inaX from Xanthomonas campestris pv. translucens.</title>
        <authorList>
            <person name="Zhao J."/>
            <person name="Orser C.S."/>
        </authorList>
    </citation>
    <scope>NUCLEOTIDE SEQUENCE [GENOMIC DNA]</scope>
    <source>
        <strain>X56S</strain>
    </source>
</reference>
<gene>
    <name type="primary">inaX</name>
</gene>
<proteinExistence type="inferred from homology"/>
<organism>
    <name type="scientific">Xanthomonas campestris pv. translucens</name>
    <dbReference type="NCBI Taxonomy" id="343"/>
    <lineage>
        <taxon>Bacteria</taxon>
        <taxon>Pseudomonadati</taxon>
        <taxon>Pseudomonadota</taxon>
        <taxon>Gammaproteobacteria</taxon>
        <taxon>Lysobacterales</taxon>
        <taxon>Lysobacteraceae</taxon>
        <taxon>Xanthomonas</taxon>
        <taxon>Xanthomonas translucens group</taxon>
    </lineage>
</organism>
<protein>
    <recommendedName>
        <fullName>Ice nucleation protein</fullName>
    </recommendedName>
</protein>
<sequence length="1567" mass="152549">MIVEKILALRTCANNMADHCGLIWPMAGPVECKFWKPSGLHENGLTGLLWGKGVGAHLSAHADARWVVCEVAVDEMLQLAEEGMIKFPRATVLFVGNRSQALDYIAANMPLYGAALQLAAPAAPAHVHMPAAEPSAPATQATSATLPTPATPSTQATPSTQSTQSTQSTEATQSTEATPVATVAAAPPPPGQQHDVMAKKTETGVYGSTLTGADQSRLVAGYGSTETAGDHSDLIAGYGSTGTAGSDSSILAGYGSTQTAAGRSTLTAGYGSTQTAQEGSRLTSGYGSTATSGSDSAVISGYGSTQTAGSESSLTAGYGSTQTARKGSDITAGYGSTGTAGSDSALIAGYGSTQTAGSESSLTAGYGSTQTARKGSDVTAGYGSTGTAGADSTLIAGYGSTQTAGGESSLTAGYGSTQTARQGSDITAGYGSTGTAGADSTLIAGYGSTQTSGSDSSLTAGYGSTQTARKGSDITAGYGSTGTAGSDSSLIAGYGSTQTAGSESSLTAGYGSTQTAQQDSSLTTGYGSTSTAGHDSSLIAGYGSTQTAGYDSTLTAGYGSTQTAQQDSSLTTGYGSTSTAGADSTLIAGYGSTQTAGSDSSLTAGYGSTQTAREGSDVTAGYGSTGTAGADSTLIAGYGSTQTSGSDSSLTAGYGSTQTARKGSDVTAGYGSTGTAGADSTLIAGYGSTQTSGSDSSLTAGYGSTQTARKGSDVTAGYGSTGTAGADSTLIAGYGSTQTSGSDSSLTAGYGSTQTARKGSDVTAGYGSTGTAGADSTLIAGYGSTQTSGSDSSLTAGYGSTQTARKGSDITAGYGSTGTAGADSTLIAGYGSTQTSGSDSSLTAGYGSTQTAREGSDVTAGYGSTGTAGADSTLISGYGSTQTAGSDSSLTAGYGSTQTARKGSDVTAGYGSTGTAGADSTLIAGYGSTQTSGSDSSLTAGYGSTQTARKGSDMTAGYGSTGTAGADSTLIAGYGSTQTSGSDSSLTAGYGSTQTAREGSDVTAGYGSTGTAGADSTLIAGYGSTQTAGSDSSLTAGYGSTQTARQGSDVTAGYGSTGTAGADSTLIAGYGSTQTAGSDSSLTAGYGSTQTARQGSDITAGYGSTGTAGADSSLIAGYGSTQTAGYDSNLTAGYGSTQTAREDSSLTAGYGSTSTAGHDSSLIAGYGSTQTAGYNSILTTGYGSTQTAQESSSLTAGYGSTSTAGYDSTLTAGYGSTQTAGYKSTLTAGYGSNSTAGHESSLIAGYGSTQIAGYESTLTAGYGSSLTTQQNSSLTAGYGSTEIAGYASTLMAGYGSSQTAGYESTLTAGYGSTQMAEHSSSLTAGYGSTGIAGQDSSLIAGYGSSLTSGVRSFLTAGYGSNMIASYGSSLIAGHECTQIAGHKSMLIAGKGSFQTAGARSTLIGGAASVQTAGDRSKLIAGADSTQTAGDRSKLLAGRNSYLTAGDRSKLTAGDDSTLMAGDRSKLTAGKNSVLTAGANSRLIGSLGSTLSGGENSTLIFRCWDGERYTNLVVRTGEQGVESDIPYQVDDEGNLVGKADDDLVLDYDPGMILDGQCSPGTGEELRDV</sequence>
<keyword id="KW-0998">Cell outer membrane</keyword>
<keyword id="KW-0387">Ice nucleation</keyword>
<keyword id="KW-0472">Membrane</keyword>
<keyword id="KW-0677">Repeat</keyword>
<dbReference type="EMBL" id="X52970">
    <property type="protein sequence ID" value="CAA37140.1"/>
    <property type="molecule type" value="Genomic_DNA"/>
</dbReference>
<dbReference type="RefSeq" id="WP_058197395.1">
    <property type="nucleotide sequence ID" value="NZ_LNVJ01000023.1"/>
</dbReference>
<dbReference type="BMRB" id="P18127"/>
<dbReference type="GO" id="GO:0009279">
    <property type="term" value="C:cell outer membrane"/>
    <property type="evidence" value="ECO:0007669"/>
    <property type="project" value="UniProtKB-SubCell"/>
</dbReference>
<dbReference type="GO" id="GO:0050825">
    <property type="term" value="F:ice binding"/>
    <property type="evidence" value="ECO:0007669"/>
    <property type="project" value="UniProtKB-KW"/>
</dbReference>
<dbReference type="InterPro" id="IPR000258">
    <property type="entry name" value="Ice_nucleatn"/>
</dbReference>
<dbReference type="PANTHER" id="PTHR31294">
    <property type="match status" value="1"/>
</dbReference>
<dbReference type="PANTHER" id="PTHR31294:SF8">
    <property type="entry name" value="KERATIN-ASSOCIATED PROTEIN 21-1-RELATED"/>
    <property type="match status" value="1"/>
</dbReference>
<dbReference type="Pfam" id="PF00818">
    <property type="entry name" value="Ice_nucleation"/>
    <property type="match status" value="46"/>
</dbReference>
<dbReference type="PRINTS" id="PR00327">
    <property type="entry name" value="ICENUCLEATN"/>
</dbReference>
<dbReference type="SUPFAM" id="SSF69349">
    <property type="entry name" value="Phage fibre proteins"/>
    <property type="match status" value="9"/>
</dbReference>
<dbReference type="PROSITE" id="PS00314">
    <property type="entry name" value="ICE_NUCLEATION"/>
    <property type="match status" value="57"/>
</dbReference>
<comment type="function">
    <text>Ice nucleation proteins enable bacteria to nucleate crystallization in supercooled water.</text>
</comment>
<comment type="subcellular location">
    <subcellularLocation>
        <location evidence="1">Cell outer membrane</location>
        <topology evidence="1">Peripheral membrane protein</topology>
    </subcellularLocation>
</comment>
<comment type="domain">
    <text>Contains 153 imperfect repeats of a consensus octapeptide A-G-Y-G-S-T-L-T; further on a 16-residue and a regional 48-residue periodicity is superimposed.</text>
</comment>
<comment type="miscellaneous">
    <text>A structural model is suggested in which the ice nucleation protein displays a symmetry related to that of ice.</text>
</comment>
<comment type="similarity">
    <text evidence="3">Belongs to the bacterial ice nucleation protein family.</text>
</comment>